<feature type="chain" id="PRO_0000239949" description="Ras-related GTP-binding protein B">
    <location>
        <begin position="1"/>
        <end position="374"/>
    </location>
</feature>
<feature type="region of interest" description="Disordered" evidence="3">
    <location>
        <begin position="1"/>
        <end position="30"/>
    </location>
</feature>
<feature type="compositionally biased region" description="Basic and acidic residues" evidence="3">
    <location>
        <begin position="1"/>
        <end position="15"/>
    </location>
</feature>
<feature type="binding site" evidence="2">
    <location>
        <position position="49"/>
    </location>
    <ligand>
        <name>GTP</name>
        <dbReference type="ChEBI" id="CHEBI:37565"/>
    </ligand>
</feature>
<feature type="binding site" evidence="2">
    <location>
        <position position="50"/>
    </location>
    <ligand>
        <name>GDP</name>
        <dbReference type="ChEBI" id="CHEBI:58189"/>
    </ligand>
</feature>
<feature type="binding site" evidence="2">
    <location>
        <position position="50"/>
    </location>
    <ligand>
        <name>GTP</name>
        <dbReference type="ChEBI" id="CHEBI:37565"/>
    </ligand>
</feature>
<feature type="binding site" evidence="2">
    <location>
        <position position="51"/>
    </location>
    <ligand>
        <name>GDP</name>
        <dbReference type="ChEBI" id="CHEBI:58189"/>
    </ligand>
</feature>
<feature type="binding site" evidence="2">
    <location>
        <position position="52"/>
    </location>
    <ligand>
        <name>GDP</name>
        <dbReference type="ChEBI" id="CHEBI:58189"/>
    </ligand>
</feature>
<feature type="binding site" evidence="2">
    <location>
        <position position="52"/>
    </location>
    <ligand>
        <name>GTP</name>
        <dbReference type="ChEBI" id="CHEBI:37565"/>
    </ligand>
</feature>
<feature type="binding site" evidence="2">
    <location>
        <position position="53"/>
    </location>
    <ligand>
        <name>GDP</name>
        <dbReference type="ChEBI" id="CHEBI:58189"/>
    </ligand>
</feature>
<feature type="binding site" evidence="2">
    <location>
        <position position="53"/>
    </location>
    <ligand>
        <name>GTP</name>
        <dbReference type="ChEBI" id="CHEBI:37565"/>
    </ligand>
</feature>
<feature type="binding site" evidence="2">
    <location>
        <position position="54"/>
    </location>
    <ligand>
        <name>GDP</name>
        <dbReference type="ChEBI" id="CHEBI:58189"/>
    </ligand>
</feature>
<feature type="binding site" evidence="2">
    <location>
        <position position="54"/>
    </location>
    <ligand>
        <name>GTP</name>
        <dbReference type="ChEBI" id="CHEBI:37565"/>
    </ligand>
</feature>
<feature type="binding site" evidence="2">
    <location>
        <position position="55"/>
    </location>
    <ligand>
        <name>GDP</name>
        <dbReference type="ChEBI" id="CHEBI:58189"/>
    </ligand>
</feature>
<feature type="binding site" evidence="2">
    <location>
        <position position="55"/>
    </location>
    <ligand>
        <name>GTP</name>
        <dbReference type="ChEBI" id="CHEBI:37565"/>
    </ligand>
</feature>
<feature type="binding site" evidence="2">
    <location>
        <position position="69"/>
    </location>
    <ligand>
        <name>GDP</name>
        <dbReference type="ChEBI" id="CHEBI:58189"/>
    </ligand>
</feature>
<feature type="binding site" evidence="2">
    <location>
        <position position="69"/>
    </location>
    <ligand>
        <name>GTP</name>
        <dbReference type="ChEBI" id="CHEBI:37565"/>
    </ligand>
</feature>
<feature type="binding site" evidence="2">
    <location>
        <position position="75"/>
    </location>
    <ligand>
        <name>GDP</name>
        <dbReference type="ChEBI" id="CHEBI:58189"/>
    </ligand>
</feature>
<feature type="binding site" evidence="2">
    <location>
        <position position="75"/>
    </location>
    <ligand>
        <name>GTP</name>
        <dbReference type="ChEBI" id="CHEBI:37565"/>
    </ligand>
</feature>
<feature type="binding site" evidence="2">
    <location>
        <position position="126"/>
    </location>
    <ligand>
        <name>GTP</name>
        <dbReference type="ChEBI" id="CHEBI:37565"/>
    </ligand>
</feature>
<feature type="binding site" evidence="2">
    <location>
        <position position="188"/>
    </location>
    <ligand>
        <name>GDP</name>
        <dbReference type="ChEBI" id="CHEBI:58189"/>
    </ligand>
</feature>
<feature type="binding site" evidence="2">
    <location>
        <position position="188"/>
    </location>
    <ligand>
        <name>GTP</name>
        <dbReference type="ChEBI" id="CHEBI:37565"/>
    </ligand>
</feature>
<feature type="binding site" evidence="2">
    <location>
        <position position="191"/>
    </location>
    <ligand>
        <name>GDP</name>
        <dbReference type="ChEBI" id="CHEBI:58189"/>
    </ligand>
</feature>
<feature type="binding site" evidence="2">
    <location>
        <position position="209"/>
    </location>
    <ligand>
        <name>GDP</name>
        <dbReference type="ChEBI" id="CHEBI:58189"/>
    </ligand>
</feature>
<feature type="binding site" evidence="2">
    <location>
        <position position="225"/>
    </location>
    <ligand>
        <name>GDP</name>
        <dbReference type="ChEBI" id="CHEBI:58189"/>
    </ligand>
</feature>
<feature type="binding site" evidence="2">
    <location>
        <position position="225"/>
    </location>
    <ligand>
        <name>GTP</name>
        <dbReference type="ChEBI" id="CHEBI:37565"/>
    </ligand>
</feature>
<feature type="modified residue" description="N-acetylmethionine" evidence="1">
    <location>
        <position position="1"/>
    </location>
</feature>
<feature type="cross-link" description="Glycyl lysine isopeptide (Lys-Gly) (interchain with G-Cter in ubiquitin)" evidence="2">
    <location>
        <position position="203"/>
    </location>
</feature>
<feature type="cross-link" description="Glycyl lysine isopeptide (Lys-Gly) (interchain with G-Cter in ubiquitin)" evidence="2">
    <location>
        <position position="281"/>
    </location>
</feature>
<feature type="cross-link" description="Glycyl lysine isopeptide (Lys-Gly) (interchain with G-Cter in ubiquitin)" evidence="2">
    <location>
        <position position="291"/>
    </location>
</feature>
<feature type="cross-link" description="Glycyl lysine isopeptide (Lys-Gly) (interchain with G-Cter in ubiquitin)" evidence="2">
    <location>
        <position position="305"/>
    </location>
</feature>
<keyword id="KW-0007">Acetylation</keyword>
<keyword id="KW-0963">Cytoplasm</keyword>
<keyword id="KW-0342">GTP-binding</keyword>
<keyword id="KW-0378">Hydrolase</keyword>
<keyword id="KW-1017">Isopeptide bond</keyword>
<keyword id="KW-0458">Lysosome</keyword>
<keyword id="KW-0472">Membrane</keyword>
<keyword id="KW-0547">Nucleotide-binding</keyword>
<keyword id="KW-1185">Reference proteome</keyword>
<keyword id="KW-0832">Ubl conjugation</keyword>
<name>RRAGB_MOUSE</name>
<comment type="function">
    <text evidence="1">Guanine nucleotide-binding protein that plays a crucial role in the cellular response to amino acid availability through regulation of the mTORC1 signaling cascade. Forms heterodimeric Rag complexes with RagC/RRAGC or RagD/RRAGD and cycles between an inactive GDP-bound and an active GTP-bound form: RagB/RRAGB is in its active form when GTP-bound RagB/RRAGB forms a complex with GDP-bound RagC/RRAGC (or RagD/RRAGD) and in an inactive form when GDP-bound RagB/RRAGB heterodimerizes with GTP-bound RagC/RRAGC (or RagD/RRAGD). In its GTP-bound active form, promotes the recruitment of mTORC1 to the lysosomes and its subsequent activation by the GTPase RHEB. Involved in the RCC1/Ran-GTPase pathway.</text>
</comment>
<comment type="catalytic activity">
    <reaction evidence="1">
        <text>GTP + H2O = GDP + phosphate + H(+)</text>
        <dbReference type="Rhea" id="RHEA:19669"/>
        <dbReference type="ChEBI" id="CHEBI:15377"/>
        <dbReference type="ChEBI" id="CHEBI:15378"/>
        <dbReference type="ChEBI" id="CHEBI:37565"/>
        <dbReference type="ChEBI" id="CHEBI:43474"/>
        <dbReference type="ChEBI" id="CHEBI:58189"/>
    </reaction>
    <physiologicalReaction direction="left-to-right" evidence="1">
        <dbReference type="Rhea" id="RHEA:19670"/>
    </physiologicalReaction>
</comment>
<comment type="activity regulation">
    <text evidence="1">The activation of GTP-binding proteins is generally mediated by a guanine exchange factor (GEF), while inactivation through hydrolysis of bound GTP is catalyzed by a GTPase activating protein (GAP). The Ragulator complex functions as a GEF and promotes the active GTP-bound form. The GATOR1 complex functions as a GAP and stimulates RRAGB GTPase activity to turn it into its inactive GDP-bound form, preventing mTORC1 recruitment and activation.</text>
</comment>
<comment type="subunit">
    <text evidence="1 2 4">Interacts with RRAGC and RRAGD; heterodimerization stabilizes RRAG proteins (By similarity). The GTP-bound form of RRAGB (in complex with the GDP-bound form of RRAGC or RRAGD) interacts with RPTOR, thereby promoting recruitment of mTORC1 to the lysosomes (By similarity). Component of the lysosomal folliculin complex (LFC), composed of FLCN, FNIP1 (or FNIP2), RagA/RRAGA or RagB/RRAGB GDP-bound, RagC/RRAGC or RagD/RRAGD GTP-bound, and Ragulator (By similarity). Interacts with SH3BP4; the interaction with this negative regulator is most probably direct, preferentially occurs with the inactive GDP-bound form of RRAGB, is negatively regulated by amino acids and prevents interaction with RPTOR (By similarity). Interacts with the GATOR1 complex; inactivates RRAGB (By similarity). The Rag heterodimer interacts with SLC38A9; the probable amino acid sensor. Interacts with SESN1, SESN2 and SESN3 (PubMed:25259925).</text>
</comment>
<comment type="subcellular location">
    <subcellularLocation>
        <location evidence="1">Cytoplasm</location>
    </subcellularLocation>
    <subcellularLocation>
        <location evidence="1">Lysosome membrane</location>
    </subcellularLocation>
    <text evidence="1">Recruited to the lysosome surface by the Ragulator complex.</text>
</comment>
<comment type="similarity">
    <text evidence="5">Belongs to the GTR/RAG GTP-binding protein family.</text>
</comment>
<reference key="1">
    <citation type="journal article" date="2009" name="PLoS Biol.">
        <title>Lineage-specific biology revealed by a finished genome assembly of the mouse.</title>
        <authorList>
            <person name="Church D.M."/>
            <person name="Goodstadt L."/>
            <person name="Hillier L.W."/>
            <person name="Zody M.C."/>
            <person name="Goldstein S."/>
            <person name="She X."/>
            <person name="Bult C.J."/>
            <person name="Agarwala R."/>
            <person name="Cherry J.L."/>
            <person name="DiCuccio M."/>
            <person name="Hlavina W."/>
            <person name="Kapustin Y."/>
            <person name="Meric P."/>
            <person name="Maglott D."/>
            <person name="Birtle Z."/>
            <person name="Marques A.C."/>
            <person name="Graves T."/>
            <person name="Zhou S."/>
            <person name="Teague B."/>
            <person name="Potamousis K."/>
            <person name="Churas C."/>
            <person name="Place M."/>
            <person name="Herschleb J."/>
            <person name="Runnheim R."/>
            <person name="Forrest D."/>
            <person name="Amos-Landgraf J."/>
            <person name="Schwartz D.C."/>
            <person name="Cheng Z."/>
            <person name="Lindblad-Toh K."/>
            <person name="Eichler E.E."/>
            <person name="Ponting C.P."/>
        </authorList>
    </citation>
    <scope>NUCLEOTIDE SEQUENCE [LARGE SCALE GENOMIC DNA]</scope>
    <source>
        <strain>C57BL/6J</strain>
    </source>
</reference>
<reference evidence="6" key="2">
    <citation type="journal article" date="2004" name="Genome Res.">
        <title>The status, quality, and expansion of the NIH full-length cDNA project: the Mammalian Gene Collection (MGC).</title>
        <authorList>
            <consortium name="The MGC Project Team"/>
        </authorList>
    </citation>
    <scope>NUCLEOTIDE SEQUENCE [LARGE SCALE MRNA]</scope>
    <source>
        <strain evidence="6">C57BL/6J</strain>
        <tissue evidence="6">Brain</tissue>
    </source>
</reference>
<reference key="3">
    <citation type="journal article" date="2014" name="Cell">
        <title>Sestrins function as guanine nucleotide dissociation inhibitors for Rag GTPases to control mTORC1 signaling.</title>
        <authorList>
            <person name="Peng M."/>
            <person name="Yin N."/>
            <person name="Li M.O."/>
        </authorList>
    </citation>
    <scope>INTERACTION WITH SESN1; SESN2 AND SESN3</scope>
</reference>
<evidence type="ECO:0000250" key="1">
    <source>
        <dbReference type="UniProtKB" id="Q5VZM2"/>
    </source>
</evidence>
<evidence type="ECO:0000250" key="2">
    <source>
        <dbReference type="UniProtKB" id="Q7L523"/>
    </source>
</evidence>
<evidence type="ECO:0000256" key="3">
    <source>
        <dbReference type="SAM" id="MobiDB-lite"/>
    </source>
</evidence>
<evidence type="ECO:0000269" key="4">
    <source>
    </source>
</evidence>
<evidence type="ECO:0000305" key="5"/>
<evidence type="ECO:0000312" key="6">
    <source>
        <dbReference type="EMBL" id="AAH69180.1"/>
    </source>
</evidence>
<evidence type="ECO:0000312" key="7">
    <source>
        <dbReference type="MGI" id="MGI:3038613"/>
    </source>
</evidence>
<gene>
    <name evidence="7" type="primary">Rragb</name>
</gene>
<organism>
    <name type="scientific">Mus musculus</name>
    <name type="common">Mouse</name>
    <dbReference type="NCBI Taxonomy" id="10090"/>
    <lineage>
        <taxon>Eukaryota</taxon>
        <taxon>Metazoa</taxon>
        <taxon>Chordata</taxon>
        <taxon>Craniata</taxon>
        <taxon>Vertebrata</taxon>
        <taxon>Euteleostomi</taxon>
        <taxon>Mammalia</taxon>
        <taxon>Eutheria</taxon>
        <taxon>Euarchontoglires</taxon>
        <taxon>Glires</taxon>
        <taxon>Rodentia</taxon>
        <taxon>Myomorpha</taxon>
        <taxon>Muroidea</taxon>
        <taxon>Muridae</taxon>
        <taxon>Murinae</taxon>
        <taxon>Mus</taxon>
        <taxon>Mus</taxon>
    </lineage>
</organism>
<dbReference type="EC" id="3.6.5.-" evidence="1"/>
<dbReference type="EMBL" id="AL672293">
    <property type="status" value="NOT_ANNOTATED_CDS"/>
    <property type="molecule type" value="Genomic_DNA"/>
</dbReference>
<dbReference type="EMBL" id="BC069180">
    <property type="protein sequence ID" value="AAH69180.1"/>
    <property type="molecule type" value="mRNA"/>
</dbReference>
<dbReference type="EMBL" id="BC070407">
    <property type="protein sequence ID" value="AAH70407.1"/>
    <property type="molecule type" value="mRNA"/>
</dbReference>
<dbReference type="CCDS" id="CCDS30480.1"/>
<dbReference type="RefSeq" id="NP_001004154.1">
    <property type="nucleotide sequence ID" value="NM_001004154.2"/>
</dbReference>
<dbReference type="SMR" id="Q6NTA4"/>
<dbReference type="BioGRID" id="232822">
    <property type="interactions" value="2"/>
</dbReference>
<dbReference type="FunCoup" id="Q6NTA4">
    <property type="interactions" value="2508"/>
</dbReference>
<dbReference type="STRING" id="10090.ENSMUSP00000039013"/>
<dbReference type="iPTMnet" id="Q6NTA4"/>
<dbReference type="PhosphoSitePlus" id="Q6NTA4"/>
<dbReference type="SwissPalm" id="Q6NTA4"/>
<dbReference type="jPOST" id="Q6NTA4"/>
<dbReference type="PaxDb" id="10090-ENSMUSP00000039013"/>
<dbReference type="PeptideAtlas" id="Q6NTA4"/>
<dbReference type="ProteomicsDB" id="299814"/>
<dbReference type="Pumba" id="Q6NTA4"/>
<dbReference type="Antibodypedia" id="447">
    <property type="antibodies" value="147 antibodies from 25 providers"/>
</dbReference>
<dbReference type="DNASU" id="245670"/>
<dbReference type="Ensembl" id="ENSMUST00000039720.11">
    <property type="protein sequence ID" value="ENSMUSP00000039013.5"/>
    <property type="gene ID" value="ENSMUSG00000041658.13"/>
</dbReference>
<dbReference type="GeneID" id="245670"/>
<dbReference type="KEGG" id="mmu:245670"/>
<dbReference type="UCSC" id="uc012hqx.1">
    <property type="organism name" value="mouse"/>
</dbReference>
<dbReference type="AGR" id="MGI:3038613"/>
<dbReference type="CTD" id="10325"/>
<dbReference type="MGI" id="MGI:3038613">
    <property type="gene designation" value="Rragb"/>
</dbReference>
<dbReference type="VEuPathDB" id="HostDB:ENSMUSG00000041658"/>
<dbReference type="eggNOG" id="KOG3886">
    <property type="taxonomic scope" value="Eukaryota"/>
</dbReference>
<dbReference type="GeneTree" id="ENSGT00950000183031"/>
<dbReference type="HOGENOM" id="CLU_044099_1_1_1"/>
<dbReference type="InParanoid" id="Q6NTA4"/>
<dbReference type="OMA" id="AFKHACS"/>
<dbReference type="OrthoDB" id="10020193at2759"/>
<dbReference type="PhylomeDB" id="Q6NTA4"/>
<dbReference type="TreeFam" id="TF300616"/>
<dbReference type="Reactome" id="R-MMU-1632852">
    <property type="pathway name" value="Macroautophagy"/>
</dbReference>
<dbReference type="Reactome" id="R-MMU-165159">
    <property type="pathway name" value="MTOR signalling"/>
</dbReference>
<dbReference type="Reactome" id="R-MMU-166208">
    <property type="pathway name" value="mTORC1-mediated signalling"/>
</dbReference>
<dbReference type="Reactome" id="R-MMU-380972">
    <property type="pathway name" value="Energy dependent regulation of mTOR by LKB1-AMPK"/>
</dbReference>
<dbReference type="Reactome" id="R-MMU-5628897">
    <property type="pathway name" value="TP53 Regulates Metabolic Genes"/>
</dbReference>
<dbReference type="Reactome" id="R-MMU-8943724">
    <property type="pathway name" value="Regulation of PTEN gene transcription"/>
</dbReference>
<dbReference type="Reactome" id="R-MMU-9639288">
    <property type="pathway name" value="Amino acids regulate mTORC1"/>
</dbReference>
<dbReference type="BioGRID-ORCS" id="245670">
    <property type="hits" value="2 hits in 77 CRISPR screens"/>
</dbReference>
<dbReference type="ChiTaRS" id="Rragb">
    <property type="organism name" value="mouse"/>
</dbReference>
<dbReference type="PRO" id="PR:Q6NTA4"/>
<dbReference type="Proteomes" id="UP000000589">
    <property type="component" value="Chromosome X"/>
</dbReference>
<dbReference type="RNAct" id="Q6NTA4">
    <property type="molecule type" value="protein"/>
</dbReference>
<dbReference type="Bgee" id="ENSMUSG00000041658">
    <property type="expression patterns" value="Expressed in hypothalamus and 62 other cell types or tissues"/>
</dbReference>
<dbReference type="ExpressionAtlas" id="Q6NTA4">
    <property type="expression patterns" value="baseline and differential"/>
</dbReference>
<dbReference type="GO" id="GO:0005737">
    <property type="term" value="C:cytoplasm"/>
    <property type="evidence" value="ECO:0000250"/>
    <property type="project" value="UniProtKB"/>
</dbReference>
<dbReference type="GO" id="GO:0005765">
    <property type="term" value="C:lysosomal membrane"/>
    <property type="evidence" value="ECO:0007669"/>
    <property type="project" value="UniProtKB-SubCell"/>
</dbReference>
<dbReference type="GO" id="GO:0005764">
    <property type="term" value="C:lysosome"/>
    <property type="evidence" value="ECO:0000250"/>
    <property type="project" value="UniProtKB"/>
</dbReference>
<dbReference type="GO" id="GO:0005525">
    <property type="term" value="F:GTP binding"/>
    <property type="evidence" value="ECO:0000250"/>
    <property type="project" value="UniProtKB"/>
</dbReference>
<dbReference type="GO" id="GO:0003924">
    <property type="term" value="F:GTPase activity"/>
    <property type="evidence" value="ECO:0007669"/>
    <property type="project" value="RHEA"/>
</dbReference>
<dbReference type="GO" id="GO:0051020">
    <property type="term" value="F:GTPase binding"/>
    <property type="evidence" value="ECO:0007669"/>
    <property type="project" value="Ensembl"/>
</dbReference>
<dbReference type="GO" id="GO:0032561">
    <property type="term" value="F:guanyl ribonucleotide binding"/>
    <property type="evidence" value="ECO:0000250"/>
    <property type="project" value="UniProtKB"/>
</dbReference>
<dbReference type="GO" id="GO:0071230">
    <property type="term" value="P:cellular response to amino acid stimulus"/>
    <property type="evidence" value="ECO:0000250"/>
    <property type="project" value="UniProtKB"/>
</dbReference>
<dbReference type="GO" id="GO:1990253">
    <property type="term" value="P:cellular response to leucine starvation"/>
    <property type="evidence" value="ECO:0007669"/>
    <property type="project" value="Ensembl"/>
</dbReference>
<dbReference type="GO" id="GO:0032008">
    <property type="term" value="P:positive regulation of TOR signaling"/>
    <property type="evidence" value="ECO:0000250"/>
    <property type="project" value="UniProtKB"/>
</dbReference>
<dbReference type="GO" id="GO:1904263">
    <property type="term" value="P:positive regulation of TORC1 signaling"/>
    <property type="evidence" value="ECO:0007669"/>
    <property type="project" value="Ensembl"/>
</dbReference>
<dbReference type="GO" id="GO:0008104">
    <property type="term" value="P:protein localization"/>
    <property type="evidence" value="ECO:0000250"/>
    <property type="project" value="UniProtKB"/>
</dbReference>
<dbReference type="CDD" id="cd11384">
    <property type="entry name" value="RagA_like"/>
    <property type="match status" value="1"/>
</dbReference>
<dbReference type="FunFam" id="3.30.450.190:FF:000002">
    <property type="entry name" value="Ras-related GTP-binding protein A"/>
    <property type="match status" value="1"/>
</dbReference>
<dbReference type="FunFam" id="3.40.50.300:FF:000276">
    <property type="entry name" value="Ras-related GTP-binding protein A"/>
    <property type="match status" value="1"/>
</dbReference>
<dbReference type="Gene3D" id="3.30.450.190">
    <property type="match status" value="1"/>
</dbReference>
<dbReference type="Gene3D" id="3.40.50.300">
    <property type="entry name" value="P-loop containing nucleotide triphosphate hydrolases"/>
    <property type="match status" value="1"/>
</dbReference>
<dbReference type="InterPro" id="IPR006762">
    <property type="entry name" value="Gtr1_RagA"/>
</dbReference>
<dbReference type="InterPro" id="IPR027417">
    <property type="entry name" value="P-loop_NTPase"/>
</dbReference>
<dbReference type="InterPro" id="IPR039397">
    <property type="entry name" value="RagA/B"/>
</dbReference>
<dbReference type="PANTHER" id="PTHR11259">
    <property type="entry name" value="RAS-RELATED GTP BINDING RAG/GTR YEAST"/>
    <property type="match status" value="1"/>
</dbReference>
<dbReference type="PANTHER" id="PTHR11259:SF4">
    <property type="entry name" value="RAS-RELATED GTP-BINDING PROTEIN B"/>
    <property type="match status" value="1"/>
</dbReference>
<dbReference type="Pfam" id="PF04670">
    <property type="entry name" value="Gtr1_RagA"/>
    <property type="match status" value="1"/>
</dbReference>
<dbReference type="SUPFAM" id="SSF52540">
    <property type="entry name" value="P-loop containing nucleoside triphosphate hydrolases"/>
    <property type="match status" value="1"/>
</dbReference>
<protein>
    <recommendedName>
        <fullName evidence="5">Ras-related GTP-binding protein B</fullName>
        <shortName evidence="1">Rag B</shortName>
        <shortName evidence="1">RagB</shortName>
        <ecNumber evidence="1">3.6.5.-</ecNumber>
    </recommendedName>
</protein>
<sequence>MEESDSEKKTEKENVGPKVEPPLGEPEGSLGWAMPNAAMKKKVLLMGKSGSGKTSMRSIIFANYIARDTRRLGATILDRIHSLQINSSLSTYSLVDSVGNTKTFDVEHSHVRFLGNLVLNLWDCGGQDTFMENYFTSQRDNIFRNVEVLIYVFDVESRELEKDMHYYQSCLEAILQNSPEAKIFCLVHKMDLVQEDQRDLIFKEREEDLRRLSRPLECSCFRTSIWDETLYKAWSSIVYQLIPNVQQLEMNLRNFAEIIEADEVLLFERATFLVISHYQCKEQRDAHRFEKISNIIKQFKLSCSKLAASFQSMEVRNSNFAAFIDIFTSNTYVMVVMSDPSIPSAATLINIRNARKHFEKLERVDGPKQCLLMR</sequence>
<accession>Q6NTA4</accession>
<accession>B1AVD6</accession>
<proteinExistence type="evidence at protein level"/>